<dbReference type="EMBL" id="AB446471">
    <property type="protein sequence ID" value="BAG55248.1"/>
    <property type="molecule type" value="mRNA"/>
</dbReference>
<dbReference type="RefSeq" id="NP_001123935.1">
    <property type="nucleotide sequence ID" value="NM_001130463.1"/>
</dbReference>
<dbReference type="BMRB" id="B3Y678"/>
<dbReference type="SMR" id="B3Y678"/>
<dbReference type="FunCoup" id="B3Y678">
    <property type="interactions" value="1630"/>
</dbReference>
<dbReference type="STRING" id="9598.ENSPTRP00000061524"/>
<dbReference type="PaxDb" id="9598-ENSPTRP00000025449"/>
<dbReference type="GeneID" id="460269"/>
<dbReference type="KEGG" id="ptr:460269"/>
<dbReference type="CTD" id="4615"/>
<dbReference type="eggNOG" id="ENOG502QWKI">
    <property type="taxonomic scope" value="Eukaryota"/>
</dbReference>
<dbReference type="HOGENOM" id="CLU_045884_0_0_1"/>
<dbReference type="InParanoid" id="B3Y678"/>
<dbReference type="OrthoDB" id="10742at9604"/>
<dbReference type="TreeFam" id="TF326264"/>
<dbReference type="Proteomes" id="UP000002277">
    <property type="component" value="Unplaced"/>
</dbReference>
<dbReference type="GO" id="GO:0005737">
    <property type="term" value="C:cytoplasm"/>
    <property type="evidence" value="ECO:0007669"/>
    <property type="project" value="UniProtKB-SubCell"/>
</dbReference>
<dbReference type="GO" id="GO:0005634">
    <property type="term" value="C:nucleus"/>
    <property type="evidence" value="ECO:0007669"/>
    <property type="project" value="UniProtKB-SubCell"/>
</dbReference>
<dbReference type="GO" id="GO:0005886">
    <property type="term" value="C:plasma membrane"/>
    <property type="evidence" value="ECO:0000318"/>
    <property type="project" value="GO_Central"/>
</dbReference>
<dbReference type="GO" id="GO:0070976">
    <property type="term" value="F:TIR domain binding"/>
    <property type="evidence" value="ECO:0007669"/>
    <property type="project" value="InterPro"/>
</dbReference>
<dbReference type="GO" id="GO:0035325">
    <property type="term" value="F:Toll-like receptor binding"/>
    <property type="evidence" value="ECO:0000318"/>
    <property type="project" value="GO_Central"/>
</dbReference>
<dbReference type="GO" id="GO:0050830">
    <property type="term" value="P:defense response to Gram-positive bacterium"/>
    <property type="evidence" value="ECO:0000250"/>
    <property type="project" value="UniProtKB"/>
</dbReference>
<dbReference type="GO" id="GO:0051607">
    <property type="term" value="P:defense response to virus"/>
    <property type="evidence" value="ECO:0000250"/>
    <property type="project" value="UniProtKB"/>
</dbReference>
<dbReference type="GO" id="GO:0006954">
    <property type="term" value="P:inflammatory response"/>
    <property type="evidence" value="ECO:0007669"/>
    <property type="project" value="UniProtKB-KW"/>
</dbReference>
<dbReference type="GO" id="GO:0045087">
    <property type="term" value="P:innate immune response"/>
    <property type="evidence" value="ECO:0000318"/>
    <property type="project" value="GO_Central"/>
</dbReference>
<dbReference type="GO" id="GO:0002755">
    <property type="term" value="P:MyD88-dependent toll-like receptor signaling pathway"/>
    <property type="evidence" value="ECO:0007669"/>
    <property type="project" value="InterPro"/>
</dbReference>
<dbReference type="GO" id="GO:0043123">
    <property type="term" value="P:positive regulation of canonical NF-kappaB signal transduction"/>
    <property type="evidence" value="ECO:0007669"/>
    <property type="project" value="InterPro"/>
</dbReference>
<dbReference type="GO" id="GO:0032731">
    <property type="term" value="P:positive regulation of interleukin-1 beta production"/>
    <property type="evidence" value="ECO:0000250"/>
    <property type="project" value="UniProtKB"/>
</dbReference>
<dbReference type="GO" id="GO:1900227">
    <property type="term" value="P:positive regulation of NLRP3 inflammasome complex assembly"/>
    <property type="evidence" value="ECO:0000250"/>
    <property type="project" value="UniProtKB"/>
</dbReference>
<dbReference type="GO" id="GO:0008063">
    <property type="term" value="P:Toll signaling pathway"/>
    <property type="evidence" value="ECO:0000318"/>
    <property type="project" value="GO_Central"/>
</dbReference>
<dbReference type="GO" id="GO:0034142">
    <property type="term" value="P:toll-like receptor 4 signaling pathway"/>
    <property type="evidence" value="ECO:0000318"/>
    <property type="project" value="GO_Central"/>
</dbReference>
<dbReference type="GO" id="GO:0034158">
    <property type="term" value="P:toll-like receptor 8 signaling pathway"/>
    <property type="evidence" value="ECO:0000250"/>
    <property type="project" value="UniProtKB"/>
</dbReference>
<dbReference type="CDD" id="cd08312">
    <property type="entry name" value="Death_MyD88"/>
    <property type="match status" value="1"/>
</dbReference>
<dbReference type="FunFam" id="1.10.533.10:FF:000029">
    <property type="entry name" value="Myeloid differentiation primary response protein MyD88"/>
    <property type="match status" value="1"/>
</dbReference>
<dbReference type="FunFam" id="3.40.50.10140:FF:000005">
    <property type="entry name" value="Myeloid differentiation primary response protein MyD88"/>
    <property type="match status" value="1"/>
</dbReference>
<dbReference type="Gene3D" id="1.10.533.10">
    <property type="entry name" value="Death Domain, Fas"/>
    <property type="match status" value="1"/>
</dbReference>
<dbReference type="Gene3D" id="3.40.50.10140">
    <property type="entry name" value="Toll/interleukin-1 receptor homology (TIR) domain"/>
    <property type="match status" value="1"/>
</dbReference>
<dbReference type="InterPro" id="IPR011029">
    <property type="entry name" value="DEATH-like_dom_sf"/>
</dbReference>
<dbReference type="InterPro" id="IPR000488">
    <property type="entry name" value="Death_dom"/>
</dbReference>
<dbReference type="InterPro" id="IPR034249">
    <property type="entry name" value="MyD88_Death"/>
</dbReference>
<dbReference type="InterPro" id="IPR017281">
    <property type="entry name" value="Myelin_different_resp_MyD88"/>
</dbReference>
<dbReference type="InterPro" id="IPR000157">
    <property type="entry name" value="TIR_dom"/>
</dbReference>
<dbReference type="InterPro" id="IPR035897">
    <property type="entry name" value="Toll_tir_struct_dom_sf"/>
</dbReference>
<dbReference type="PANTHER" id="PTHR15079">
    <property type="entry name" value="MYD88"/>
    <property type="match status" value="1"/>
</dbReference>
<dbReference type="PANTHER" id="PTHR15079:SF3">
    <property type="entry name" value="MYELOID DIFFERENTIATION PRIMARY RESPONSE PROTEIN MYD88"/>
    <property type="match status" value="1"/>
</dbReference>
<dbReference type="Pfam" id="PF00531">
    <property type="entry name" value="Death"/>
    <property type="match status" value="1"/>
</dbReference>
<dbReference type="Pfam" id="PF13676">
    <property type="entry name" value="TIR_2"/>
    <property type="match status" value="1"/>
</dbReference>
<dbReference type="PIRSF" id="PIRSF037756">
    <property type="entry name" value="MyD88"/>
    <property type="match status" value="1"/>
</dbReference>
<dbReference type="SMART" id="SM00005">
    <property type="entry name" value="DEATH"/>
    <property type="match status" value="1"/>
</dbReference>
<dbReference type="SMART" id="SM00255">
    <property type="entry name" value="TIR"/>
    <property type="match status" value="1"/>
</dbReference>
<dbReference type="SUPFAM" id="SSF47986">
    <property type="entry name" value="DEATH domain"/>
    <property type="match status" value="1"/>
</dbReference>
<dbReference type="SUPFAM" id="SSF52200">
    <property type="entry name" value="Toll/Interleukin receptor TIR domain"/>
    <property type="match status" value="1"/>
</dbReference>
<dbReference type="PROSITE" id="PS50017">
    <property type="entry name" value="DEATH_DOMAIN"/>
    <property type="match status" value="1"/>
</dbReference>
<dbReference type="PROSITE" id="PS50104">
    <property type="entry name" value="TIR"/>
    <property type="match status" value="1"/>
</dbReference>
<sequence length="296" mass="33270">MAAGGPAAGSAAPISSTSSLPLAALNMRVRRRLSLFLNVRTQVAADWTALAEEMDFEYLEIRQLETHADPTGRLLDAWQGRPGASVGRLLELLTKLGRDDVLLELGPSIEEDCQKYILKQQQEEAEKPLQVAAVDSSVPRTAELAGITTLDDPLGHMPERFDAFICYCPSDIQFVQEMIRQLEQTNYRLKLCVSDRDVLPGTCVWSIASELIEKRCRRMVVVVSDDYLQSKECDFQTKFALSLSPGAHQKRLIPIKYKAMKKEFPSILRFITVCDYTNPCTKSWFWTRLAKALSLP</sequence>
<accession>B3Y678</accession>
<proteinExistence type="evidence at transcript level"/>
<protein>
    <recommendedName>
        <fullName>Myeloid differentiation primary response protein MyD88</fullName>
    </recommendedName>
</protein>
<comment type="function">
    <text evidence="2 3">Adapter protein involved in the Toll-like receptor and IL-1 receptor signaling pathway in the innate immune response. Acts via IRAK1, IRAK2, IRF7 and TRAF6, leading to NF-kappa-B activation, cytokine secretion and the inflammatory response. Increases IL-8 transcription. Involved in IL-18-mediated signaling pathway. Activates IRF1 resulting in its rapid migration into the nucleus to mediate an efficient induction of IFN-beta, NOS2/INOS, and IL12A genes. Upon TLR8 activation by GU-rich single-stranded RNA (GU-rich RNA) derived from viruses, induces IL1B release through NLRP3 inflammasome activation (By similarity). MyD88-mediated signaling in intestinal epithelial cells is crucial for maintenance of gut homeostasis and controls the expression of the antimicrobial lectin REG3G in the small intestine (By similarity).</text>
</comment>
<comment type="subunit">
    <text evidence="3">Homodimer. Also forms heterodimers with TIRAP. Binds to TLR2, TLR4, IRAK1, IRAK2 and IRAK4 via their respective TIR domains. Interacts with IL18R1. Interacts with BMX, IL1RL1, IKBKE and IRF7. Interacts with LRRFIP1 and LRRFIP2; this interaction positively regulates Toll-like receptor (TLR) signaling in response to agonist. Interacts with FLII. LRRFIP1 and LRRFIP2 compete with FLII for MYD88-binding. Interacts with IRF1. Upon IL1B treatment, forms a complex with PELI1, IRAK1, IRAK4 and TRAF6; this complex recruits MAP3K7/TAK1, TAB1 and TAB2 to mediate NF-kappa-B activation. Direct binding of SMAD6 to PELI1 prevents the complex formation and hence negatively regulates IL1R-TLR signaling and eventually NF-kappa-B-mediated gene expression. May interact with PIK3AP1. Interacts (via TIR domain) with DHX9 (via H2A and OB-fold regions); this interaction is direct. Interacts with OTUD4 deubiquitinase; the interaction is direct.</text>
</comment>
<comment type="subcellular location">
    <subcellularLocation>
        <location evidence="3">Cytoplasm</location>
    </subcellularLocation>
    <subcellularLocation>
        <location evidence="3">Nucleus</location>
    </subcellularLocation>
</comment>
<comment type="domain">
    <text evidence="2">The intermediate domain (ID) is required for the phosphorylation and activation of IRAK.</text>
</comment>
<comment type="PTM">
    <text evidence="3">Ubiquitinated; undergoes 'Lys-63'-linked polyubiquitination. OTUD4 specifically hydrolyzes 'Lys-63'-linked polyubiquitinated MYD88. Deubiquitinated by USP3 that cleaves 'Lys-63'-linked ubiquitin chains leading to inhibition of MYD88-induced NF-kappa-B signaling.</text>
</comment>
<keyword id="KW-0963">Cytoplasm</keyword>
<keyword id="KW-0391">Immunity</keyword>
<keyword id="KW-0395">Inflammatory response</keyword>
<keyword id="KW-0399">Innate immunity</keyword>
<keyword id="KW-0539">Nucleus</keyword>
<keyword id="KW-0597">Phosphoprotein</keyword>
<keyword id="KW-1185">Reference proteome</keyword>
<keyword id="KW-0832">Ubl conjugation</keyword>
<gene>
    <name type="primary">MYD88</name>
</gene>
<reference key="1">
    <citation type="journal article" date="2008" name="Immunogenetics">
        <title>Natural selection in the TLR-related genes in the course of primate evolution.</title>
        <authorList>
            <person name="Nakajima T."/>
            <person name="Ohtani H."/>
            <person name="Satta Y."/>
            <person name="Uno Y."/>
            <person name="Akari H."/>
            <person name="Ishida T."/>
            <person name="Kimura A."/>
        </authorList>
    </citation>
    <scope>NUCLEOTIDE SEQUENCE [MRNA]</scope>
</reference>
<organism>
    <name type="scientific">Pan troglodytes</name>
    <name type="common">Chimpanzee</name>
    <dbReference type="NCBI Taxonomy" id="9598"/>
    <lineage>
        <taxon>Eukaryota</taxon>
        <taxon>Metazoa</taxon>
        <taxon>Chordata</taxon>
        <taxon>Craniata</taxon>
        <taxon>Vertebrata</taxon>
        <taxon>Euteleostomi</taxon>
        <taxon>Mammalia</taxon>
        <taxon>Eutheria</taxon>
        <taxon>Euarchontoglires</taxon>
        <taxon>Primates</taxon>
        <taxon>Haplorrhini</taxon>
        <taxon>Catarrhini</taxon>
        <taxon>Hominidae</taxon>
        <taxon>Pan</taxon>
    </lineage>
</organism>
<feature type="chain" id="PRO_0000393135" description="Myeloid differentiation primary response protein MyD88">
    <location>
        <begin position="1"/>
        <end position="296"/>
    </location>
</feature>
<feature type="domain" description="Death" evidence="4">
    <location>
        <begin position="32"/>
        <end position="109"/>
    </location>
</feature>
<feature type="domain" description="TIR" evidence="5">
    <location>
        <begin position="159"/>
        <end position="293"/>
    </location>
</feature>
<feature type="region of interest" description="Intermediate domain" evidence="1">
    <location>
        <begin position="110"/>
        <end position="155"/>
    </location>
</feature>
<feature type="modified residue" description="Phosphoserine" evidence="3">
    <location>
        <position position="244"/>
    </location>
</feature>
<name>MYD88_PANTR</name>
<evidence type="ECO:0000250" key="1"/>
<evidence type="ECO:0000250" key="2">
    <source>
        <dbReference type="UniProtKB" id="P22366"/>
    </source>
</evidence>
<evidence type="ECO:0000250" key="3">
    <source>
        <dbReference type="UniProtKB" id="Q99836"/>
    </source>
</evidence>
<evidence type="ECO:0000255" key="4">
    <source>
        <dbReference type="PROSITE-ProRule" id="PRU00064"/>
    </source>
</evidence>
<evidence type="ECO:0000255" key="5">
    <source>
        <dbReference type="PROSITE-ProRule" id="PRU00204"/>
    </source>
</evidence>